<gene>
    <name type="ordered locus">VC_2612</name>
</gene>
<evidence type="ECO:0000255" key="1">
    <source>
        <dbReference type="HAMAP-Rule" id="MF_00690"/>
    </source>
</evidence>
<name>Y2612_VIBCH</name>
<proteinExistence type="inferred from homology"/>
<organism>
    <name type="scientific">Vibrio cholerae serotype O1 (strain ATCC 39315 / El Tor Inaba N16961)</name>
    <dbReference type="NCBI Taxonomy" id="243277"/>
    <lineage>
        <taxon>Bacteria</taxon>
        <taxon>Pseudomonadati</taxon>
        <taxon>Pseudomonadota</taxon>
        <taxon>Gammaproteobacteria</taxon>
        <taxon>Vibrionales</taxon>
        <taxon>Vibrionaceae</taxon>
        <taxon>Vibrio</taxon>
    </lineage>
</organism>
<accession>Q9KNW8</accession>
<sequence>MIIPWQEIAPETLDNLIREFVLREGTDYGDIEVSLDEKIAQVRTQLQSGQAVIVYSELHETVDIKCHPF</sequence>
<keyword id="KW-1185">Reference proteome</keyword>
<protein>
    <recommendedName>
        <fullName evidence="1">UPF0270 protein VC_2612</fullName>
    </recommendedName>
</protein>
<dbReference type="EMBL" id="AE003852">
    <property type="protein sequence ID" value="AAF95753.1"/>
    <property type="molecule type" value="Genomic_DNA"/>
</dbReference>
<dbReference type="PIR" id="H82056">
    <property type="entry name" value="H82056"/>
</dbReference>
<dbReference type="RefSeq" id="NP_232240.1">
    <property type="nucleotide sequence ID" value="NC_002505.1"/>
</dbReference>
<dbReference type="RefSeq" id="WP_000586562.1">
    <property type="nucleotide sequence ID" value="NZ_LT906614.1"/>
</dbReference>
<dbReference type="SMR" id="Q9KNW8"/>
<dbReference type="STRING" id="243277.VC_2612"/>
<dbReference type="DNASU" id="2615629"/>
<dbReference type="EnsemblBacteria" id="AAF95753">
    <property type="protein sequence ID" value="AAF95753"/>
    <property type="gene ID" value="VC_2612"/>
</dbReference>
<dbReference type="KEGG" id="vch:VC_2612"/>
<dbReference type="PATRIC" id="fig|243277.26.peg.2490"/>
<dbReference type="eggNOG" id="COG3089">
    <property type="taxonomic scope" value="Bacteria"/>
</dbReference>
<dbReference type="HOGENOM" id="CLU_186759_1_0_6"/>
<dbReference type="Proteomes" id="UP000000584">
    <property type="component" value="Chromosome 1"/>
</dbReference>
<dbReference type="Gene3D" id="1.10.10.610">
    <property type="entry name" value="YehU-like"/>
    <property type="match status" value="1"/>
</dbReference>
<dbReference type="HAMAP" id="MF_00690">
    <property type="entry name" value="UPF0270"/>
    <property type="match status" value="1"/>
</dbReference>
<dbReference type="InterPro" id="IPR010648">
    <property type="entry name" value="UPF0270"/>
</dbReference>
<dbReference type="InterPro" id="IPR036685">
    <property type="entry name" value="YehU-like_sf"/>
</dbReference>
<dbReference type="NCBIfam" id="NF003438">
    <property type="entry name" value="PRK04966.1"/>
    <property type="match status" value="1"/>
</dbReference>
<dbReference type="Pfam" id="PF06794">
    <property type="entry name" value="UPF0270"/>
    <property type="match status" value="1"/>
</dbReference>
<dbReference type="PIRSF" id="PIRSF006169">
    <property type="entry name" value="UCP006169"/>
    <property type="match status" value="1"/>
</dbReference>
<dbReference type="SUPFAM" id="SSF118001">
    <property type="entry name" value="YehU-like"/>
    <property type="match status" value="1"/>
</dbReference>
<comment type="similarity">
    <text evidence="1">Belongs to the UPF0270 family.</text>
</comment>
<reference key="1">
    <citation type="journal article" date="2000" name="Nature">
        <title>DNA sequence of both chromosomes of the cholera pathogen Vibrio cholerae.</title>
        <authorList>
            <person name="Heidelberg J.F."/>
            <person name="Eisen J.A."/>
            <person name="Nelson W.C."/>
            <person name="Clayton R.A."/>
            <person name="Gwinn M.L."/>
            <person name="Dodson R.J."/>
            <person name="Haft D.H."/>
            <person name="Hickey E.K."/>
            <person name="Peterson J.D."/>
            <person name="Umayam L.A."/>
            <person name="Gill S.R."/>
            <person name="Nelson K.E."/>
            <person name="Read T.D."/>
            <person name="Tettelin H."/>
            <person name="Richardson D.L."/>
            <person name="Ermolaeva M.D."/>
            <person name="Vamathevan J.J."/>
            <person name="Bass S."/>
            <person name="Qin H."/>
            <person name="Dragoi I."/>
            <person name="Sellers P."/>
            <person name="McDonald L.A."/>
            <person name="Utterback T.R."/>
            <person name="Fleischmann R.D."/>
            <person name="Nierman W.C."/>
            <person name="White O."/>
            <person name="Salzberg S.L."/>
            <person name="Smith H.O."/>
            <person name="Colwell R.R."/>
            <person name="Mekalanos J.J."/>
            <person name="Venter J.C."/>
            <person name="Fraser C.M."/>
        </authorList>
    </citation>
    <scope>NUCLEOTIDE SEQUENCE [LARGE SCALE GENOMIC DNA]</scope>
    <source>
        <strain>ATCC 39315 / El Tor Inaba N16961</strain>
    </source>
</reference>
<feature type="chain" id="PRO_0000214859" description="UPF0270 protein VC_2612">
    <location>
        <begin position="1"/>
        <end position="69"/>
    </location>
</feature>